<dbReference type="EC" id="3.6.-.-" evidence="1"/>
<dbReference type="EMBL" id="CP000494">
    <property type="protein sequence ID" value="ABQ32461.1"/>
    <property type="molecule type" value="Genomic_DNA"/>
</dbReference>
<dbReference type="RefSeq" id="WP_011942682.1">
    <property type="nucleotide sequence ID" value="NC_009485.1"/>
</dbReference>
<dbReference type="SMR" id="A5E8G7"/>
<dbReference type="STRING" id="288000.BBta_0164"/>
<dbReference type="KEGG" id="bbt:BBta_0164"/>
<dbReference type="eggNOG" id="COG0486">
    <property type="taxonomic scope" value="Bacteria"/>
</dbReference>
<dbReference type="HOGENOM" id="CLU_019624_3_1_5"/>
<dbReference type="OrthoDB" id="9805918at2"/>
<dbReference type="Proteomes" id="UP000000246">
    <property type="component" value="Chromosome"/>
</dbReference>
<dbReference type="GO" id="GO:0005737">
    <property type="term" value="C:cytoplasm"/>
    <property type="evidence" value="ECO:0007669"/>
    <property type="project" value="UniProtKB-SubCell"/>
</dbReference>
<dbReference type="GO" id="GO:0005525">
    <property type="term" value="F:GTP binding"/>
    <property type="evidence" value="ECO:0007669"/>
    <property type="project" value="UniProtKB-UniRule"/>
</dbReference>
<dbReference type="GO" id="GO:0003924">
    <property type="term" value="F:GTPase activity"/>
    <property type="evidence" value="ECO:0007669"/>
    <property type="project" value="UniProtKB-UniRule"/>
</dbReference>
<dbReference type="GO" id="GO:0046872">
    <property type="term" value="F:metal ion binding"/>
    <property type="evidence" value="ECO:0007669"/>
    <property type="project" value="UniProtKB-KW"/>
</dbReference>
<dbReference type="GO" id="GO:0030488">
    <property type="term" value="P:tRNA methylation"/>
    <property type="evidence" value="ECO:0007669"/>
    <property type="project" value="TreeGrafter"/>
</dbReference>
<dbReference type="GO" id="GO:0002098">
    <property type="term" value="P:tRNA wobble uridine modification"/>
    <property type="evidence" value="ECO:0007669"/>
    <property type="project" value="TreeGrafter"/>
</dbReference>
<dbReference type="CDD" id="cd04164">
    <property type="entry name" value="trmE"/>
    <property type="match status" value="1"/>
</dbReference>
<dbReference type="CDD" id="cd14858">
    <property type="entry name" value="TrmE_N"/>
    <property type="match status" value="1"/>
</dbReference>
<dbReference type="FunFam" id="3.30.1360.120:FF:000007">
    <property type="entry name" value="tRNA modification GTPase GTPBP3, mitochondrial"/>
    <property type="match status" value="1"/>
</dbReference>
<dbReference type="Gene3D" id="3.40.50.300">
    <property type="entry name" value="P-loop containing nucleotide triphosphate hydrolases"/>
    <property type="match status" value="1"/>
</dbReference>
<dbReference type="Gene3D" id="3.30.1360.120">
    <property type="entry name" value="Probable tRNA modification gtpase trme, domain 1"/>
    <property type="match status" value="1"/>
</dbReference>
<dbReference type="Gene3D" id="1.20.120.430">
    <property type="entry name" value="tRNA modification GTPase MnmE domain 2"/>
    <property type="match status" value="1"/>
</dbReference>
<dbReference type="HAMAP" id="MF_00379">
    <property type="entry name" value="GTPase_MnmE"/>
    <property type="match status" value="1"/>
</dbReference>
<dbReference type="InterPro" id="IPR031168">
    <property type="entry name" value="G_TrmE"/>
</dbReference>
<dbReference type="InterPro" id="IPR006073">
    <property type="entry name" value="GTP-bd"/>
</dbReference>
<dbReference type="InterPro" id="IPR018948">
    <property type="entry name" value="GTP-bd_TrmE_N"/>
</dbReference>
<dbReference type="InterPro" id="IPR004520">
    <property type="entry name" value="GTPase_MnmE"/>
</dbReference>
<dbReference type="InterPro" id="IPR027368">
    <property type="entry name" value="MnmE_dom2"/>
</dbReference>
<dbReference type="InterPro" id="IPR025867">
    <property type="entry name" value="MnmE_helical"/>
</dbReference>
<dbReference type="InterPro" id="IPR027417">
    <property type="entry name" value="P-loop_NTPase"/>
</dbReference>
<dbReference type="InterPro" id="IPR005225">
    <property type="entry name" value="Small_GTP-bd"/>
</dbReference>
<dbReference type="InterPro" id="IPR027266">
    <property type="entry name" value="TrmE/GcvT_dom1"/>
</dbReference>
<dbReference type="NCBIfam" id="TIGR00450">
    <property type="entry name" value="mnmE_trmE_thdF"/>
    <property type="match status" value="1"/>
</dbReference>
<dbReference type="NCBIfam" id="NF003661">
    <property type="entry name" value="PRK05291.1-3"/>
    <property type="match status" value="1"/>
</dbReference>
<dbReference type="NCBIfam" id="TIGR00231">
    <property type="entry name" value="small_GTP"/>
    <property type="match status" value="1"/>
</dbReference>
<dbReference type="PANTHER" id="PTHR42714">
    <property type="entry name" value="TRNA MODIFICATION GTPASE GTPBP3"/>
    <property type="match status" value="1"/>
</dbReference>
<dbReference type="PANTHER" id="PTHR42714:SF2">
    <property type="entry name" value="TRNA MODIFICATION GTPASE GTPBP3, MITOCHONDRIAL"/>
    <property type="match status" value="1"/>
</dbReference>
<dbReference type="Pfam" id="PF01926">
    <property type="entry name" value="MMR_HSR1"/>
    <property type="match status" value="1"/>
</dbReference>
<dbReference type="Pfam" id="PF12631">
    <property type="entry name" value="MnmE_helical"/>
    <property type="match status" value="1"/>
</dbReference>
<dbReference type="Pfam" id="PF10396">
    <property type="entry name" value="TrmE_N"/>
    <property type="match status" value="1"/>
</dbReference>
<dbReference type="SUPFAM" id="SSF52540">
    <property type="entry name" value="P-loop containing nucleoside triphosphate hydrolases"/>
    <property type="match status" value="1"/>
</dbReference>
<dbReference type="SUPFAM" id="SSF116878">
    <property type="entry name" value="TrmE connector domain"/>
    <property type="match status" value="1"/>
</dbReference>
<dbReference type="PROSITE" id="PS51709">
    <property type="entry name" value="G_TRME"/>
    <property type="match status" value="1"/>
</dbReference>
<sequence>MHPHDQTIFALSSGRPPSAIAIVRLSGVGAGPALQTLTGKLPPPRLATRALLRDDRGDPIDDAVVLWFPGPASATGEDVAELHVHGSRAVITTLVSLLSAMPQMRAADRGEFTRRAFENGKIDLTEAEGLDDLIHADTDRQRRQALRQLKGLLGDKARSWRDQIIQAAALIEAGIDFADEGDVPAELIAPALAWIRQLLAEIEEVLAAQGRAERLRDGLTVVIAGPPNAGKSTLMNQLARREVAIVSPHAGTTRDLIEVALDLDGYPVTVIDTAGIRQTDDPVEQEGVRRARDRAAQADLVLWLTEDDQAELERQTDGPIWFVRNKIDLMITEQSGAISVSPESPVFAISARSGAGMSDLLEALVGFARDYFGATEHGLITRERQRTWLSETAAALRRSIAAVDLGEELAAEELRIAALALGRLLGRVDVEDLLDVIFREFCIGK</sequence>
<name>MNME_BRASB</name>
<protein>
    <recommendedName>
        <fullName evidence="1">tRNA modification GTPase MnmE</fullName>
        <ecNumber evidence="1">3.6.-.-</ecNumber>
    </recommendedName>
</protein>
<keyword id="KW-0963">Cytoplasm</keyword>
<keyword id="KW-0342">GTP-binding</keyword>
<keyword id="KW-0378">Hydrolase</keyword>
<keyword id="KW-0460">Magnesium</keyword>
<keyword id="KW-0479">Metal-binding</keyword>
<keyword id="KW-0547">Nucleotide-binding</keyword>
<keyword id="KW-0630">Potassium</keyword>
<keyword id="KW-1185">Reference proteome</keyword>
<keyword id="KW-0819">tRNA processing</keyword>
<reference key="1">
    <citation type="journal article" date="2007" name="Science">
        <title>Legumes symbioses: absence of nod genes in photosynthetic bradyrhizobia.</title>
        <authorList>
            <person name="Giraud E."/>
            <person name="Moulin L."/>
            <person name="Vallenet D."/>
            <person name="Barbe V."/>
            <person name="Cytryn E."/>
            <person name="Avarre J.-C."/>
            <person name="Jaubert M."/>
            <person name="Simon D."/>
            <person name="Cartieaux F."/>
            <person name="Prin Y."/>
            <person name="Bena G."/>
            <person name="Hannibal L."/>
            <person name="Fardoux J."/>
            <person name="Kojadinovic M."/>
            <person name="Vuillet L."/>
            <person name="Lajus A."/>
            <person name="Cruveiller S."/>
            <person name="Rouy Z."/>
            <person name="Mangenot S."/>
            <person name="Segurens B."/>
            <person name="Dossat C."/>
            <person name="Franck W.L."/>
            <person name="Chang W.-S."/>
            <person name="Saunders E."/>
            <person name="Bruce D."/>
            <person name="Richardson P."/>
            <person name="Normand P."/>
            <person name="Dreyfus B."/>
            <person name="Pignol D."/>
            <person name="Stacey G."/>
            <person name="Emerich D."/>
            <person name="Vermeglio A."/>
            <person name="Medigue C."/>
            <person name="Sadowsky M."/>
        </authorList>
    </citation>
    <scope>NUCLEOTIDE SEQUENCE [LARGE SCALE GENOMIC DNA]</scope>
    <source>
        <strain>BTAi1 / ATCC BAA-1182</strain>
    </source>
</reference>
<accession>A5E8G7</accession>
<evidence type="ECO:0000255" key="1">
    <source>
        <dbReference type="HAMAP-Rule" id="MF_00379"/>
    </source>
</evidence>
<gene>
    <name evidence="1" type="primary">mnmE</name>
    <name evidence="1" type="synonym">trmE</name>
    <name type="ordered locus">BBta_0164</name>
</gene>
<proteinExistence type="inferred from homology"/>
<comment type="function">
    <text evidence="1">Exhibits a very high intrinsic GTPase hydrolysis rate. Involved in the addition of a carboxymethylaminomethyl (cmnm) group at the wobble position (U34) of certain tRNAs, forming tRNA-cmnm(5)s(2)U34.</text>
</comment>
<comment type="cofactor">
    <cofactor evidence="1">
        <name>K(+)</name>
        <dbReference type="ChEBI" id="CHEBI:29103"/>
    </cofactor>
    <text evidence="1">Binds 1 potassium ion per subunit.</text>
</comment>
<comment type="subunit">
    <text evidence="1">Homodimer. Heterotetramer of two MnmE and two MnmG subunits.</text>
</comment>
<comment type="subcellular location">
    <subcellularLocation>
        <location evidence="1">Cytoplasm</location>
    </subcellularLocation>
</comment>
<comment type="similarity">
    <text evidence="1">Belongs to the TRAFAC class TrmE-Era-EngA-EngB-Septin-like GTPase superfamily. TrmE GTPase family.</text>
</comment>
<organism>
    <name type="scientific">Bradyrhizobium sp. (strain BTAi1 / ATCC BAA-1182)</name>
    <dbReference type="NCBI Taxonomy" id="288000"/>
    <lineage>
        <taxon>Bacteria</taxon>
        <taxon>Pseudomonadati</taxon>
        <taxon>Pseudomonadota</taxon>
        <taxon>Alphaproteobacteria</taxon>
        <taxon>Hyphomicrobiales</taxon>
        <taxon>Nitrobacteraceae</taxon>
        <taxon>Bradyrhizobium</taxon>
    </lineage>
</organism>
<feature type="chain" id="PRO_0000345725" description="tRNA modification GTPase MnmE">
    <location>
        <begin position="1"/>
        <end position="445"/>
    </location>
</feature>
<feature type="domain" description="TrmE-type G">
    <location>
        <begin position="218"/>
        <end position="369"/>
    </location>
</feature>
<feature type="binding site" evidence="1">
    <location>
        <position position="24"/>
    </location>
    <ligand>
        <name>(6S)-5-formyl-5,6,7,8-tetrahydrofolate</name>
        <dbReference type="ChEBI" id="CHEBI:57457"/>
    </ligand>
</feature>
<feature type="binding site" evidence="1">
    <location>
        <position position="81"/>
    </location>
    <ligand>
        <name>(6S)-5-formyl-5,6,7,8-tetrahydrofolate</name>
        <dbReference type="ChEBI" id="CHEBI:57457"/>
    </ligand>
</feature>
<feature type="binding site" evidence="1">
    <location>
        <position position="121"/>
    </location>
    <ligand>
        <name>(6S)-5-formyl-5,6,7,8-tetrahydrofolate</name>
        <dbReference type="ChEBI" id="CHEBI:57457"/>
    </ligand>
</feature>
<feature type="binding site" evidence="1">
    <location>
        <begin position="228"/>
        <end position="233"/>
    </location>
    <ligand>
        <name>GTP</name>
        <dbReference type="ChEBI" id="CHEBI:37565"/>
    </ligand>
</feature>
<feature type="binding site" evidence="1">
    <location>
        <position position="232"/>
    </location>
    <ligand>
        <name>Mg(2+)</name>
        <dbReference type="ChEBI" id="CHEBI:18420"/>
    </ligand>
</feature>
<feature type="binding site" evidence="1">
    <location>
        <begin position="247"/>
        <end position="253"/>
    </location>
    <ligand>
        <name>GTP</name>
        <dbReference type="ChEBI" id="CHEBI:37565"/>
    </ligand>
</feature>
<feature type="binding site" evidence="1">
    <location>
        <position position="253"/>
    </location>
    <ligand>
        <name>Mg(2+)</name>
        <dbReference type="ChEBI" id="CHEBI:18420"/>
    </ligand>
</feature>
<feature type="binding site" evidence="1">
    <location>
        <begin position="272"/>
        <end position="275"/>
    </location>
    <ligand>
        <name>GTP</name>
        <dbReference type="ChEBI" id="CHEBI:37565"/>
    </ligand>
</feature>
<feature type="binding site" evidence="1">
    <location>
        <begin position="350"/>
        <end position="352"/>
    </location>
    <ligand>
        <name>GTP</name>
        <dbReference type="ChEBI" id="CHEBI:37565"/>
    </ligand>
</feature>
<feature type="binding site" evidence="1">
    <location>
        <position position="445"/>
    </location>
    <ligand>
        <name>(6S)-5-formyl-5,6,7,8-tetrahydrofolate</name>
        <dbReference type="ChEBI" id="CHEBI:57457"/>
    </ligand>
</feature>